<feature type="chain" id="PRO_0000388185" description="ATPase GET3">
    <location>
        <begin position="1"/>
        <end position="341"/>
    </location>
</feature>
<feature type="active site" evidence="1">
    <location>
        <position position="63"/>
    </location>
</feature>
<feature type="binding site" evidence="1">
    <location>
        <begin position="34"/>
        <end position="41"/>
    </location>
    <ligand>
        <name>ATP</name>
        <dbReference type="ChEBI" id="CHEBI:30616"/>
    </ligand>
</feature>
<feature type="binding site" evidence="1">
    <location>
        <position position="245"/>
    </location>
    <ligand>
        <name>ATP</name>
        <dbReference type="ChEBI" id="CHEBI:30616"/>
    </ligand>
</feature>
<feature type="binding site" evidence="1">
    <location>
        <position position="272"/>
    </location>
    <ligand>
        <name>ATP</name>
        <dbReference type="ChEBI" id="CHEBI:30616"/>
    </ligand>
</feature>
<feature type="binding site" evidence="1">
    <location>
        <position position="283"/>
    </location>
    <ligand>
        <name>Zn(2+)</name>
        <dbReference type="ChEBI" id="CHEBI:29105"/>
        <note>ligand shared between dimeric partners</note>
    </ligand>
</feature>
<feature type="binding site" evidence="1">
    <location>
        <position position="286"/>
    </location>
    <ligand>
        <name>Zn(2+)</name>
        <dbReference type="ChEBI" id="CHEBI:29105"/>
        <note>ligand shared between dimeric partners</note>
    </ligand>
</feature>
<dbReference type="EC" id="3.6.-.-" evidence="1"/>
<dbReference type="EMBL" id="GG657460">
    <property type="protein sequence ID" value="OAT10470.1"/>
    <property type="molecule type" value="Genomic_DNA"/>
</dbReference>
<dbReference type="RefSeq" id="XP_002623460.1">
    <property type="nucleotide sequence ID" value="XM_002623414.1"/>
</dbReference>
<dbReference type="SMR" id="C5JUG0"/>
<dbReference type="STRING" id="559298.C5JUG0"/>
<dbReference type="GeneID" id="8509224"/>
<dbReference type="KEGG" id="bgh:BDBG_06308"/>
<dbReference type="VEuPathDB" id="FungiDB:BDBG_06308"/>
<dbReference type="HOGENOM" id="CLU_040761_0_0_1"/>
<dbReference type="OrthoDB" id="1770at2759"/>
<dbReference type="Proteomes" id="UP000002038">
    <property type="component" value="Unassembled WGS sequence"/>
</dbReference>
<dbReference type="GO" id="GO:0043529">
    <property type="term" value="C:GET complex"/>
    <property type="evidence" value="ECO:0007669"/>
    <property type="project" value="TreeGrafter"/>
</dbReference>
<dbReference type="GO" id="GO:0005524">
    <property type="term" value="F:ATP binding"/>
    <property type="evidence" value="ECO:0007669"/>
    <property type="project" value="UniProtKB-UniRule"/>
</dbReference>
<dbReference type="GO" id="GO:0016887">
    <property type="term" value="F:ATP hydrolysis activity"/>
    <property type="evidence" value="ECO:0007669"/>
    <property type="project" value="InterPro"/>
</dbReference>
<dbReference type="GO" id="GO:0046872">
    <property type="term" value="F:metal ion binding"/>
    <property type="evidence" value="ECO:0007669"/>
    <property type="project" value="UniProtKB-KW"/>
</dbReference>
<dbReference type="GO" id="GO:0071816">
    <property type="term" value="P:tail-anchored membrane protein insertion into ER membrane"/>
    <property type="evidence" value="ECO:0007669"/>
    <property type="project" value="TreeGrafter"/>
</dbReference>
<dbReference type="CDD" id="cd02035">
    <property type="entry name" value="ArsA"/>
    <property type="match status" value="1"/>
</dbReference>
<dbReference type="FunFam" id="3.40.50.300:FF:000235">
    <property type="entry name" value="ATPase ASNA1"/>
    <property type="match status" value="1"/>
</dbReference>
<dbReference type="Gene3D" id="3.40.50.300">
    <property type="entry name" value="P-loop containing nucleotide triphosphate hydrolases"/>
    <property type="match status" value="1"/>
</dbReference>
<dbReference type="HAMAP" id="MF_03112">
    <property type="entry name" value="Asna1_Get3"/>
    <property type="match status" value="1"/>
</dbReference>
<dbReference type="InterPro" id="IPR025723">
    <property type="entry name" value="Anion-transp_ATPase-like_dom"/>
</dbReference>
<dbReference type="InterPro" id="IPR016300">
    <property type="entry name" value="ATPase_ArsA/GET3"/>
</dbReference>
<dbReference type="InterPro" id="IPR027542">
    <property type="entry name" value="ATPase_ArsA/GET3_euk"/>
</dbReference>
<dbReference type="InterPro" id="IPR027417">
    <property type="entry name" value="P-loop_NTPase"/>
</dbReference>
<dbReference type="NCBIfam" id="TIGR00345">
    <property type="entry name" value="GET3_arsA_TRC40"/>
    <property type="match status" value="1"/>
</dbReference>
<dbReference type="PANTHER" id="PTHR10803">
    <property type="entry name" value="ARSENICAL PUMP-DRIVING ATPASE ARSENITE-TRANSLOCATING ATPASE"/>
    <property type="match status" value="1"/>
</dbReference>
<dbReference type="PANTHER" id="PTHR10803:SF3">
    <property type="entry name" value="ATPASE GET3"/>
    <property type="match status" value="1"/>
</dbReference>
<dbReference type="Pfam" id="PF02374">
    <property type="entry name" value="ArsA_ATPase"/>
    <property type="match status" value="1"/>
</dbReference>
<dbReference type="SUPFAM" id="SSF52540">
    <property type="entry name" value="P-loop containing nucleoside triphosphate hydrolases"/>
    <property type="match status" value="1"/>
</dbReference>
<keyword id="KW-0067">ATP-binding</keyword>
<keyword id="KW-0963">Cytoplasm</keyword>
<keyword id="KW-0256">Endoplasmic reticulum</keyword>
<keyword id="KW-0378">Hydrolase</keyword>
<keyword id="KW-0479">Metal-binding</keyword>
<keyword id="KW-0547">Nucleotide-binding</keyword>
<keyword id="KW-1185">Reference proteome</keyword>
<keyword id="KW-0813">Transport</keyword>
<keyword id="KW-0862">Zinc</keyword>
<organism>
    <name type="scientific">Blastomyces gilchristii (strain SLH14081)</name>
    <name type="common">Blastomyces dermatitidis</name>
    <dbReference type="NCBI Taxonomy" id="559298"/>
    <lineage>
        <taxon>Eukaryota</taxon>
        <taxon>Fungi</taxon>
        <taxon>Dikarya</taxon>
        <taxon>Ascomycota</taxon>
        <taxon>Pezizomycotina</taxon>
        <taxon>Eurotiomycetes</taxon>
        <taxon>Eurotiomycetidae</taxon>
        <taxon>Onygenales</taxon>
        <taxon>Ajellomycetaceae</taxon>
        <taxon>Blastomyces</taxon>
    </lineage>
</organism>
<evidence type="ECO:0000255" key="1">
    <source>
        <dbReference type="HAMAP-Rule" id="MF_03112"/>
    </source>
</evidence>
<name>GET3_BLAGS</name>
<proteinExistence type="inferred from homology"/>
<comment type="function">
    <text evidence="1">ATPase required for the post-translational delivery of tail-anchored (TA) proteins to the endoplasmic reticulum. Recognizes and selectively binds the transmembrane domain of TA proteins in the cytosol. This complex then targets to the endoplasmic reticulum by membrane-bound receptors, where the tail-anchored protein is released for insertion. This process is regulated by ATP binding and hydrolysis. ATP binding drives the homodimer towards the closed dimer state, facilitating recognition of newly synthesized TA membrane proteins. ATP hydrolysis is required for insertion. Subsequently, the homodimer reverts towards the open dimer state, lowering its affinity for the membrane-bound receptor, and returning it to the cytosol to initiate a new round of targeting.</text>
</comment>
<comment type="subunit">
    <text evidence="1">Homodimer.</text>
</comment>
<comment type="subcellular location">
    <subcellularLocation>
        <location evidence="1">Cytoplasm</location>
    </subcellularLocation>
    <subcellularLocation>
        <location evidence="1">Endoplasmic reticulum</location>
    </subcellularLocation>
</comment>
<comment type="similarity">
    <text evidence="1">Belongs to the arsA ATPase family.</text>
</comment>
<sequence length="341" mass="37436">MSSTAIVSGDESLEPTLQNLLDQKTLRWVFVGGKGGVGKTTTSCSLAIQLAKVRKSVLLISTDPAHNLSDAFGQKFGKEARLIDGFDNLSAMEIDPNGSIQDLLAAGGDQADDPMGGLGLGGMMQDLAFSIPGVDEAMSFAEVLKQVKSLSYEVIIFDTAPTGHTLRFLQFPTVLEKALGKLSQLSSQFGPMLNSVLGARGGLPGGQNLDEILSKMESLRETIGEVNAQFKDADLTTFVCVCIAEFLSLYETERMIQELTSYQIDTHCIVVNQLLFPGKDSSCEQCKARRKMQKKYLNEIEELYEDFNVVRMPMLVEEVRGKEKLEKFSNMLINPYIPPQE</sequence>
<reference key="1">
    <citation type="journal article" date="2015" name="PLoS Genet.">
        <title>The dynamic genome and transcriptome of the human fungal pathogen Blastomyces and close relative Emmonsia.</title>
        <authorList>
            <person name="Munoz J.F."/>
            <person name="Gauthier G.M."/>
            <person name="Desjardins C.A."/>
            <person name="Gallo J.E."/>
            <person name="Holder J."/>
            <person name="Sullivan T.D."/>
            <person name="Marty A.J."/>
            <person name="Carmen J.C."/>
            <person name="Chen Z."/>
            <person name="Ding L."/>
            <person name="Gujja S."/>
            <person name="Magrini V."/>
            <person name="Misas E."/>
            <person name="Mitreva M."/>
            <person name="Priest M."/>
            <person name="Saif S."/>
            <person name="Whiston E.A."/>
            <person name="Young S."/>
            <person name="Zeng Q."/>
            <person name="Goldman W.E."/>
            <person name="Mardis E.R."/>
            <person name="Taylor J.W."/>
            <person name="McEwen J.G."/>
            <person name="Clay O.K."/>
            <person name="Klein B.S."/>
            <person name="Cuomo C.A."/>
        </authorList>
    </citation>
    <scope>NUCLEOTIDE SEQUENCE [LARGE SCALE GENOMIC DNA]</scope>
    <source>
        <strain>SLH14081</strain>
    </source>
</reference>
<protein>
    <recommendedName>
        <fullName evidence="1">ATPase GET3</fullName>
        <ecNumber evidence="1">3.6.-.-</ecNumber>
    </recommendedName>
    <alternativeName>
        <fullName evidence="1">Arsenical pump-driving ATPase</fullName>
    </alternativeName>
    <alternativeName>
        <fullName evidence="1">Arsenite-stimulated ATPase</fullName>
    </alternativeName>
    <alternativeName>
        <fullName evidence="1">Golgi to ER traffic protein 3</fullName>
    </alternativeName>
    <alternativeName>
        <fullName evidence="1">Guided entry of tail-anchored proteins 3</fullName>
    </alternativeName>
</protein>
<gene>
    <name evidence="1" type="primary">GET3</name>
    <name type="ORF">BDBG_06308</name>
</gene>
<accession>C5JUG0</accession>
<accession>A0A179URJ7</accession>